<gene>
    <name type="primary">flgA</name>
    <name type="ordered locus">Atu0551</name>
    <name type="ORF">AGR_C_971</name>
</gene>
<comment type="subcellular location">
    <subcellularLocation>
        <location evidence="2">Periplasm</location>
    </subcellularLocation>
</comment>
<comment type="similarity">
    <text evidence="2">Belongs to the FlgA family.</text>
</comment>
<organism>
    <name type="scientific">Agrobacterium fabrum (strain C58 / ATCC 33970)</name>
    <name type="common">Agrobacterium tumefaciens (strain C58)</name>
    <dbReference type="NCBI Taxonomy" id="176299"/>
    <lineage>
        <taxon>Bacteria</taxon>
        <taxon>Pseudomonadati</taxon>
        <taxon>Pseudomonadota</taxon>
        <taxon>Alphaproteobacteria</taxon>
        <taxon>Hyphomicrobiales</taxon>
        <taxon>Rhizobiaceae</taxon>
        <taxon>Rhizobium/Agrobacterium group</taxon>
        <taxon>Agrobacterium</taxon>
        <taxon>Agrobacterium tumefaciens complex</taxon>
    </lineage>
</organism>
<evidence type="ECO:0000255" key="1"/>
<evidence type="ECO:0000305" key="2"/>
<reference key="1">
    <citation type="journal article" date="1997" name="Gene">
        <title>Isolation and characterisation of a linked cluster of genes from Agrobacterium tumefaciens encoding proteins involved in flagellar basal-body structure.</title>
        <authorList>
            <person name="Deakin W.J."/>
            <person name="Furniss C.S."/>
            <person name="Parker V.E."/>
            <person name="Shaw C.H."/>
        </authorList>
    </citation>
    <scope>NUCLEOTIDE SEQUENCE [GENOMIC DNA]</scope>
</reference>
<reference key="2">
    <citation type="journal article" date="2001" name="Science">
        <title>The genome of the natural genetic engineer Agrobacterium tumefaciens C58.</title>
        <authorList>
            <person name="Wood D.W."/>
            <person name="Setubal J.C."/>
            <person name="Kaul R."/>
            <person name="Monks D.E."/>
            <person name="Kitajima J.P."/>
            <person name="Okura V.K."/>
            <person name="Zhou Y."/>
            <person name="Chen L."/>
            <person name="Wood G.E."/>
            <person name="Almeida N.F. Jr."/>
            <person name="Woo L."/>
            <person name="Chen Y."/>
            <person name="Paulsen I.T."/>
            <person name="Eisen J.A."/>
            <person name="Karp P.D."/>
            <person name="Bovee D. Sr."/>
            <person name="Chapman P."/>
            <person name="Clendenning J."/>
            <person name="Deatherage G."/>
            <person name="Gillet W."/>
            <person name="Grant C."/>
            <person name="Kutyavin T."/>
            <person name="Levy R."/>
            <person name="Li M.-J."/>
            <person name="McClelland E."/>
            <person name="Palmieri A."/>
            <person name="Raymond C."/>
            <person name="Rouse G."/>
            <person name="Saenphimmachak C."/>
            <person name="Wu Z."/>
            <person name="Romero P."/>
            <person name="Gordon D."/>
            <person name="Zhang S."/>
            <person name="Yoo H."/>
            <person name="Tao Y."/>
            <person name="Biddle P."/>
            <person name="Jung M."/>
            <person name="Krespan W."/>
            <person name="Perry M."/>
            <person name="Gordon-Kamm B."/>
            <person name="Liao L."/>
            <person name="Kim S."/>
            <person name="Hendrick C."/>
            <person name="Zhao Z.-Y."/>
            <person name="Dolan M."/>
            <person name="Chumley F."/>
            <person name="Tingey S.V."/>
            <person name="Tomb J.-F."/>
            <person name="Gordon M.P."/>
            <person name="Olson M.V."/>
            <person name="Nester E.W."/>
        </authorList>
    </citation>
    <scope>NUCLEOTIDE SEQUENCE [LARGE SCALE GENOMIC DNA]</scope>
    <source>
        <strain>C58 / ATCC 33970</strain>
    </source>
</reference>
<reference key="3">
    <citation type="journal article" date="2001" name="Science">
        <title>Genome sequence of the plant pathogen and biotechnology agent Agrobacterium tumefaciens C58.</title>
        <authorList>
            <person name="Goodner B."/>
            <person name="Hinkle G."/>
            <person name="Gattung S."/>
            <person name="Miller N."/>
            <person name="Blanchard M."/>
            <person name="Qurollo B."/>
            <person name="Goldman B.S."/>
            <person name="Cao Y."/>
            <person name="Askenazi M."/>
            <person name="Halling C."/>
            <person name="Mullin L."/>
            <person name="Houmiel K."/>
            <person name="Gordon J."/>
            <person name="Vaudin M."/>
            <person name="Iartchouk O."/>
            <person name="Epp A."/>
            <person name="Liu F."/>
            <person name="Wollam C."/>
            <person name="Allinger M."/>
            <person name="Doughty D."/>
            <person name="Scott C."/>
            <person name="Lappas C."/>
            <person name="Markelz B."/>
            <person name="Flanagan C."/>
            <person name="Crowell C."/>
            <person name="Gurson J."/>
            <person name="Lomo C."/>
            <person name="Sear C."/>
            <person name="Strub G."/>
            <person name="Cielo C."/>
            <person name="Slater S."/>
        </authorList>
    </citation>
    <scope>NUCLEOTIDE SEQUENCE [LARGE SCALE GENOMIC DNA]</scope>
    <source>
        <strain>C58 / ATCC 33970</strain>
    </source>
</reference>
<accession>Q44339</accession>
<proteinExistence type="inferred from homology"/>
<keyword id="KW-1005">Bacterial flagellum biogenesis</keyword>
<keyword id="KW-0574">Periplasm</keyword>
<keyword id="KW-1185">Reference proteome</keyword>
<keyword id="KW-0732">Signal</keyword>
<sequence length="162" mass="16991">MRFGRNNSSCRTALVRMCLASAFSLGALAPALAQAPMALVPVRTIYPGEAISPEQVKSVEVTNPNISAGYASDISEVEGMISKQTLLPGRTIPIAALREPSLVVRGTSVKLVFHIGNMTLMASGTPMSDGSLGEVVRVRNIDSGVMVSGTVMKDGTIQVMAK</sequence>
<name>FLGA_AGRFC</name>
<dbReference type="EMBL" id="U39941">
    <property type="protein sequence ID" value="AAB68969.1"/>
    <property type="molecule type" value="Genomic_DNA"/>
</dbReference>
<dbReference type="EMBL" id="U95165">
    <property type="protein sequence ID" value="AAB71791.1"/>
    <property type="molecule type" value="Genomic_DNA"/>
</dbReference>
<dbReference type="EMBL" id="AE007869">
    <property type="protein sequence ID" value="AAK86363.2"/>
    <property type="molecule type" value="Genomic_DNA"/>
</dbReference>
<dbReference type="PIR" id="AB2644">
    <property type="entry name" value="AB2644"/>
</dbReference>
<dbReference type="PIR" id="B97426">
    <property type="entry name" value="B97426"/>
</dbReference>
<dbReference type="RefSeq" id="NP_353578.2">
    <property type="nucleotide sequence ID" value="NC_003062.2"/>
</dbReference>
<dbReference type="RefSeq" id="WP_010970973.1">
    <property type="nucleotide sequence ID" value="NC_003062.2"/>
</dbReference>
<dbReference type="SMR" id="Q44339"/>
<dbReference type="STRING" id="176299.Atu0551"/>
<dbReference type="DNASU" id="1132589"/>
<dbReference type="EnsemblBacteria" id="AAK86363">
    <property type="protein sequence ID" value="AAK86363"/>
    <property type="gene ID" value="Atu0551"/>
</dbReference>
<dbReference type="GeneID" id="1132589"/>
<dbReference type="KEGG" id="atu:Atu0551"/>
<dbReference type="PATRIC" id="fig|176299.10.peg.547"/>
<dbReference type="eggNOG" id="COG1261">
    <property type="taxonomic scope" value="Bacteria"/>
</dbReference>
<dbReference type="HOGENOM" id="CLU_131516_0_0_5"/>
<dbReference type="OrthoDB" id="8448733at2"/>
<dbReference type="PhylomeDB" id="Q44339"/>
<dbReference type="BioCyc" id="AGRO:ATU0551-MONOMER"/>
<dbReference type="Proteomes" id="UP000000813">
    <property type="component" value="Chromosome circular"/>
</dbReference>
<dbReference type="GO" id="GO:0042597">
    <property type="term" value="C:periplasmic space"/>
    <property type="evidence" value="ECO:0007669"/>
    <property type="project" value="UniProtKB-SubCell"/>
</dbReference>
<dbReference type="GO" id="GO:0044780">
    <property type="term" value="P:bacterial-type flagellum assembly"/>
    <property type="evidence" value="ECO:0007669"/>
    <property type="project" value="InterPro"/>
</dbReference>
<dbReference type="CDD" id="cd11614">
    <property type="entry name" value="SAF_CpaB_FlgA_like"/>
    <property type="match status" value="1"/>
</dbReference>
<dbReference type="Gene3D" id="2.30.30.760">
    <property type="match status" value="1"/>
</dbReference>
<dbReference type="Gene3D" id="3.90.1210.10">
    <property type="entry name" value="Antifreeze-like/N-acetylneuraminic acid synthase C-terminal domain"/>
    <property type="match status" value="1"/>
</dbReference>
<dbReference type="InterPro" id="IPR017585">
    <property type="entry name" value="Flag_basal_body_FlgA_C"/>
</dbReference>
<dbReference type="InterPro" id="IPR039246">
    <property type="entry name" value="Flagellar_FlgA"/>
</dbReference>
<dbReference type="InterPro" id="IPR013974">
    <property type="entry name" value="SAF"/>
</dbReference>
<dbReference type="NCBIfam" id="TIGR03170">
    <property type="entry name" value="flgA_cterm"/>
    <property type="match status" value="1"/>
</dbReference>
<dbReference type="PANTHER" id="PTHR36307">
    <property type="entry name" value="FLAGELLA BASAL BODY P-RING FORMATION PROTEIN FLGA"/>
    <property type="match status" value="1"/>
</dbReference>
<dbReference type="PANTHER" id="PTHR36307:SF1">
    <property type="entry name" value="FLAGELLA BASAL BODY P-RING FORMATION PROTEIN FLGA"/>
    <property type="match status" value="1"/>
</dbReference>
<dbReference type="Pfam" id="PF13144">
    <property type="entry name" value="ChapFlgA"/>
    <property type="match status" value="1"/>
</dbReference>
<dbReference type="SMART" id="SM00858">
    <property type="entry name" value="SAF"/>
    <property type="match status" value="1"/>
</dbReference>
<protein>
    <recommendedName>
        <fullName>Flagellar protein FlgA</fullName>
    </recommendedName>
</protein>
<feature type="signal peptide" evidence="1">
    <location>
        <begin position="1"/>
        <end position="26"/>
    </location>
</feature>
<feature type="chain" id="PRO_0000009344" description="Flagellar protein FlgA">
    <location>
        <begin position="27"/>
        <end position="162"/>
    </location>
</feature>